<accession>A3MTB5</accession>
<sequence length="333" mass="37769">MSAALKRYDLDKLAVATVASHTALQILRGAKRYGFRTIAVAQRNADFYRQFSFIDEVWTADFSNFRHVAEKLVEKNALFIPHGSYVEYVGWRQALEAPVPTLGCRELLRWEADQYKKMELLAAAGIPTPRYYKRAEEAEGPVIVKLFGAKGGRGYFVAKNREELAKRIKAVEGDYIIQEYVFGVPAYYHYFASPVYNRVEIFGMDIRYETNVDGRTFGWVEPTFVVVGNLPLVLRESLLPVVHKYGVDFAKAVREKVSCELAGPYCLESIIRDDMTIVVFEFSGRIVAGTNVYMGVGSPYSVLYFDEPMDMGERIAHEIKEAAARGILEKLFT</sequence>
<gene>
    <name evidence="2" type="primary">purP</name>
    <name type="ordered locus">Pcal_0449</name>
</gene>
<comment type="function">
    <text evidence="2">Catalyzes the ATP- and formate-dependent formylation of 5-aminoimidazole-4-carboxamide-1-beta-d-ribofuranosyl 5'-monophosphate (AICAR) to 5-formaminoimidazole-4-carboxamide-1-beta-d-ribofuranosyl 5'-monophosphate (FAICAR) in the absence of folates.</text>
</comment>
<comment type="catalytic activity">
    <reaction evidence="2">
        <text>5-amino-1-(5-phospho-beta-D-ribosyl)imidazole-4-carboxamide + formate + ATP = 5-formamido-1-(5-phospho-D-ribosyl)imidazole-4-carboxamide + ADP + phosphate</text>
        <dbReference type="Rhea" id="RHEA:24836"/>
        <dbReference type="ChEBI" id="CHEBI:15740"/>
        <dbReference type="ChEBI" id="CHEBI:30616"/>
        <dbReference type="ChEBI" id="CHEBI:43474"/>
        <dbReference type="ChEBI" id="CHEBI:58467"/>
        <dbReference type="ChEBI" id="CHEBI:58475"/>
        <dbReference type="ChEBI" id="CHEBI:456216"/>
        <dbReference type="EC" id="6.3.4.23"/>
    </reaction>
</comment>
<comment type="cofactor">
    <cofactor evidence="1">
        <name>Mg(2+)</name>
        <dbReference type="ChEBI" id="CHEBI:18420"/>
    </cofactor>
    <cofactor evidence="1">
        <name>Mn(2+)</name>
        <dbReference type="ChEBI" id="CHEBI:29035"/>
    </cofactor>
    <text evidence="1">Binds 1 Mg(2+) or Mn(2+) ion per subunit.</text>
</comment>
<comment type="pathway">
    <text evidence="2">Purine metabolism; IMP biosynthesis via de novo pathway; 5-formamido-1-(5-phospho-D-ribosyl)imidazole-4-carboxamide from 5-amino-1-(5-phospho-D-ribosyl)imidazole-4-carboxamide (formate route): step 1/1.</text>
</comment>
<comment type="similarity">
    <text evidence="2">Belongs to the phosphohexose mutase family.</text>
</comment>
<reference key="1">
    <citation type="submission" date="2007-02" db="EMBL/GenBank/DDBJ databases">
        <title>Complete sequence of Pyrobaculum calidifontis JCM 11548.</title>
        <authorList>
            <consortium name="US DOE Joint Genome Institute"/>
            <person name="Copeland A."/>
            <person name="Lucas S."/>
            <person name="Lapidus A."/>
            <person name="Barry K."/>
            <person name="Glavina del Rio T."/>
            <person name="Dalin E."/>
            <person name="Tice H."/>
            <person name="Pitluck S."/>
            <person name="Chain P."/>
            <person name="Malfatti S."/>
            <person name="Shin M."/>
            <person name="Vergez L."/>
            <person name="Schmutz J."/>
            <person name="Larimer F."/>
            <person name="Land M."/>
            <person name="Hauser L."/>
            <person name="Kyrpides N."/>
            <person name="Mikhailova N."/>
            <person name="Cozen A.E."/>
            <person name="Fitz-Gibbon S.T."/>
            <person name="House C.H."/>
            <person name="Saltikov C."/>
            <person name="Lowe T.M."/>
            <person name="Richardson P."/>
        </authorList>
    </citation>
    <scope>NUCLEOTIDE SEQUENCE [LARGE SCALE GENOMIC DNA]</scope>
    <source>
        <strain>DSM 21063 / JCM 11548 / VA1</strain>
    </source>
</reference>
<name>PURP_PYRCJ</name>
<feature type="chain" id="PRO_0000348633" description="5-formaminoimidazole-4-carboxamide-1-(beta)-D-ribofuranosyl 5'-monophosphate synthetase">
    <location>
        <begin position="1"/>
        <end position="333"/>
    </location>
</feature>
<feature type="domain" description="ATP-grasp" evidence="2">
    <location>
        <begin position="118"/>
        <end position="313"/>
    </location>
</feature>
<feature type="binding site" evidence="2">
    <location>
        <position position="21"/>
    </location>
    <ligand>
        <name>5-amino-1-(5-phospho-beta-D-ribosyl)imidazole-4-carboxamide</name>
        <dbReference type="ChEBI" id="CHEBI:58475"/>
    </ligand>
</feature>
<feature type="binding site" evidence="2">
    <location>
        <position position="84"/>
    </location>
    <ligand>
        <name>5-amino-1-(5-phospho-beta-D-ribosyl)imidazole-4-carboxamide</name>
        <dbReference type="ChEBI" id="CHEBI:58475"/>
    </ligand>
</feature>
<feature type="binding site" evidence="2">
    <location>
        <begin position="141"/>
        <end position="187"/>
    </location>
    <ligand>
        <name>ATP</name>
        <dbReference type="ChEBI" id="CHEBI:30616"/>
    </ligand>
</feature>
<feature type="binding site" evidence="2">
    <location>
        <position position="209"/>
    </location>
    <ligand>
        <name>ATP</name>
        <dbReference type="ChEBI" id="CHEBI:30616"/>
    </ligand>
</feature>
<feature type="binding site" evidence="2">
    <location>
        <position position="229"/>
    </location>
    <ligand>
        <name>5-amino-1-(5-phospho-beta-D-ribosyl)imidazole-4-carboxamide</name>
        <dbReference type="ChEBI" id="CHEBI:58475"/>
    </ligand>
</feature>
<feature type="binding site" evidence="2">
    <location>
        <position position="268"/>
    </location>
    <ligand>
        <name>Mg(2+)</name>
        <dbReference type="ChEBI" id="CHEBI:18420"/>
    </ligand>
</feature>
<feature type="binding site" evidence="2">
    <location>
        <position position="281"/>
    </location>
    <ligand>
        <name>Mg(2+)</name>
        <dbReference type="ChEBI" id="CHEBI:18420"/>
    </ligand>
</feature>
<protein>
    <recommendedName>
        <fullName evidence="2">5-formaminoimidazole-4-carboxamide-1-(beta)-D-ribofuranosyl 5'-monophosphate synthetase</fullName>
        <ecNumber evidence="2">6.3.4.23</ecNumber>
    </recommendedName>
    <alternativeName>
        <fullName evidence="2">5-aminoimidazole-4-carboxamide-1-beta-D-ribofuranosyl 5'-monophosphate--formate ligase</fullName>
    </alternativeName>
</protein>
<organism>
    <name type="scientific">Pyrobaculum calidifontis (strain DSM 21063 / JCM 11548 / VA1)</name>
    <dbReference type="NCBI Taxonomy" id="410359"/>
    <lineage>
        <taxon>Archaea</taxon>
        <taxon>Thermoproteota</taxon>
        <taxon>Thermoprotei</taxon>
        <taxon>Thermoproteales</taxon>
        <taxon>Thermoproteaceae</taxon>
        <taxon>Pyrobaculum</taxon>
    </lineage>
</organism>
<keyword id="KW-0067">ATP-binding</keyword>
<keyword id="KW-0436">Ligase</keyword>
<keyword id="KW-0460">Magnesium</keyword>
<keyword id="KW-0464">Manganese</keyword>
<keyword id="KW-0479">Metal-binding</keyword>
<keyword id="KW-0547">Nucleotide-binding</keyword>
<keyword id="KW-0658">Purine biosynthesis</keyword>
<evidence type="ECO:0000250" key="1"/>
<evidence type="ECO:0000255" key="2">
    <source>
        <dbReference type="HAMAP-Rule" id="MF_01163"/>
    </source>
</evidence>
<proteinExistence type="inferred from homology"/>
<dbReference type="EC" id="6.3.4.23" evidence="2"/>
<dbReference type="EMBL" id="CP000561">
    <property type="protein sequence ID" value="ABO07882.1"/>
    <property type="molecule type" value="Genomic_DNA"/>
</dbReference>
<dbReference type="RefSeq" id="WP_011849140.1">
    <property type="nucleotide sequence ID" value="NC_009073.1"/>
</dbReference>
<dbReference type="SMR" id="A3MTB5"/>
<dbReference type="STRING" id="410359.Pcal_0449"/>
<dbReference type="GeneID" id="4909352"/>
<dbReference type="KEGG" id="pcl:Pcal_0449"/>
<dbReference type="eggNOG" id="arCOG04346">
    <property type="taxonomic scope" value="Archaea"/>
</dbReference>
<dbReference type="HOGENOM" id="CLU_065084_0_0_2"/>
<dbReference type="OrthoDB" id="98133at2157"/>
<dbReference type="UniPathway" id="UPA00074">
    <property type="reaction ID" value="UER00134"/>
</dbReference>
<dbReference type="Proteomes" id="UP000001431">
    <property type="component" value="Chromosome"/>
</dbReference>
<dbReference type="GO" id="GO:0005524">
    <property type="term" value="F:ATP binding"/>
    <property type="evidence" value="ECO:0007669"/>
    <property type="project" value="UniProtKB-KW"/>
</dbReference>
<dbReference type="GO" id="GO:0016879">
    <property type="term" value="F:ligase activity, forming carbon-nitrogen bonds"/>
    <property type="evidence" value="ECO:0007669"/>
    <property type="project" value="UniProtKB-UniRule"/>
</dbReference>
<dbReference type="GO" id="GO:0000287">
    <property type="term" value="F:magnesium ion binding"/>
    <property type="evidence" value="ECO:0007669"/>
    <property type="project" value="InterPro"/>
</dbReference>
<dbReference type="GO" id="GO:0006189">
    <property type="term" value="P:'de novo' IMP biosynthetic process"/>
    <property type="evidence" value="ECO:0007669"/>
    <property type="project" value="UniProtKB-UniRule"/>
</dbReference>
<dbReference type="Gene3D" id="3.40.50.20">
    <property type="match status" value="1"/>
</dbReference>
<dbReference type="Gene3D" id="3.30.1490.20">
    <property type="entry name" value="ATP-grasp fold, A domain"/>
    <property type="match status" value="1"/>
</dbReference>
<dbReference type="Gene3D" id="3.30.470.20">
    <property type="entry name" value="ATP-grasp fold, B domain"/>
    <property type="match status" value="1"/>
</dbReference>
<dbReference type="HAMAP" id="MF_01163">
    <property type="entry name" value="IMP_biosynth_PurP"/>
    <property type="match status" value="1"/>
</dbReference>
<dbReference type="InterPro" id="IPR011761">
    <property type="entry name" value="ATP-grasp"/>
</dbReference>
<dbReference type="InterPro" id="IPR013815">
    <property type="entry name" value="ATP_grasp_subdomain_1"/>
</dbReference>
<dbReference type="InterPro" id="IPR023656">
    <property type="entry name" value="IMP_biosynth_PurP"/>
</dbReference>
<dbReference type="InterPro" id="IPR009720">
    <property type="entry name" value="IMP_biosynth_PurP_C"/>
</dbReference>
<dbReference type="InterPro" id="IPR010672">
    <property type="entry name" value="IMP_biosynth_PurP_N"/>
</dbReference>
<dbReference type="InterPro" id="IPR016185">
    <property type="entry name" value="PreATP-grasp_dom_sf"/>
</dbReference>
<dbReference type="PANTHER" id="PTHR38147:SF2">
    <property type="entry name" value="5-FORMAMINOIMIDAZOLE-4-CARBOXAMIDE-1-(BETA)-D-RIBOFURANOSYL 5'-MONOPHOSPHATE SYNTHETASE"/>
    <property type="match status" value="1"/>
</dbReference>
<dbReference type="PANTHER" id="PTHR38147">
    <property type="entry name" value="5-FORMAMINOIMIDAZOLE-4-CARBOXAMIDE-1-(BETA)-D-RIBOFURANOSYL 5'-MONOPHOSPHATE SYNTHETASE-RELATED"/>
    <property type="match status" value="1"/>
</dbReference>
<dbReference type="Pfam" id="PF06849">
    <property type="entry name" value="DUF1246"/>
    <property type="match status" value="1"/>
</dbReference>
<dbReference type="Pfam" id="PF06973">
    <property type="entry name" value="DUF1297"/>
    <property type="match status" value="1"/>
</dbReference>
<dbReference type="PIRSF" id="PIRSF004602">
    <property type="entry name" value="ATPgrasp_PurP"/>
    <property type="match status" value="1"/>
</dbReference>
<dbReference type="SUPFAM" id="SSF56059">
    <property type="entry name" value="Glutathione synthetase ATP-binding domain-like"/>
    <property type="match status" value="1"/>
</dbReference>
<dbReference type="SUPFAM" id="SSF52440">
    <property type="entry name" value="PreATP-grasp domain"/>
    <property type="match status" value="1"/>
</dbReference>
<dbReference type="PROSITE" id="PS50975">
    <property type="entry name" value="ATP_GRASP"/>
    <property type="match status" value="1"/>
</dbReference>